<name>PYRH_THEGJ</name>
<organism>
    <name type="scientific">Thermococcus gammatolerans (strain DSM 15229 / JCM 11827 / EJ3)</name>
    <dbReference type="NCBI Taxonomy" id="593117"/>
    <lineage>
        <taxon>Archaea</taxon>
        <taxon>Methanobacteriati</taxon>
        <taxon>Methanobacteriota</taxon>
        <taxon>Thermococci</taxon>
        <taxon>Thermococcales</taxon>
        <taxon>Thermococcaceae</taxon>
        <taxon>Thermococcus</taxon>
    </lineage>
</organism>
<sequence length="225" mass="24670">MRIVFDIGGSVLVPEDPDVEFIKAIAYELIKISEDHEVAVVVGGGKVARKYIKAAKTFTPNETFKDYIGIHITRANAMLLIAALGEKAYPFVIQDFRKAWEVIQLKKIPIMGGTHPGHTTDAVSALLAEYLQADLLVVVTNVDGVYDSDPRKNPNARKLDRITPEQLVEIAMEAESKAGGSGVVDALAAKFIQRGRIRTYIVGKKDAYHLFDVVRGKHSGTVVEP</sequence>
<comment type="function">
    <text evidence="1">Catalyzes the reversible phosphorylation of UMP to UDP.</text>
</comment>
<comment type="catalytic activity">
    <reaction evidence="1">
        <text>UMP + ATP = UDP + ADP</text>
        <dbReference type="Rhea" id="RHEA:24400"/>
        <dbReference type="ChEBI" id="CHEBI:30616"/>
        <dbReference type="ChEBI" id="CHEBI:57865"/>
        <dbReference type="ChEBI" id="CHEBI:58223"/>
        <dbReference type="ChEBI" id="CHEBI:456216"/>
        <dbReference type="EC" id="2.7.4.22"/>
    </reaction>
</comment>
<comment type="activity regulation">
    <text evidence="1">Inhibited by UTP.</text>
</comment>
<comment type="pathway">
    <text evidence="1">Pyrimidine metabolism; CTP biosynthesis via de novo pathway; UDP from UMP (UMPK route): step 1/1.</text>
</comment>
<comment type="subunit">
    <text evidence="1">Homohexamer.</text>
</comment>
<comment type="subcellular location">
    <subcellularLocation>
        <location evidence="1">Cytoplasm</location>
    </subcellularLocation>
</comment>
<comment type="similarity">
    <text evidence="1">Belongs to the UMP kinase family.</text>
</comment>
<feature type="chain" id="PRO_1000213960" description="Uridylate kinase">
    <location>
        <begin position="1"/>
        <end position="225"/>
    </location>
</feature>
<feature type="binding site" evidence="1">
    <location>
        <begin position="9"/>
        <end position="10"/>
    </location>
    <ligand>
        <name>ATP</name>
        <dbReference type="ChEBI" id="CHEBI:30616"/>
    </ligand>
</feature>
<feature type="binding site" evidence="1">
    <location>
        <position position="44"/>
    </location>
    <ligand>
        <name>UMP</name>
        <dbReference type="ChEBI" id="CHEBI:57865"/>
    </ligand>
</feature>
<feature type="binding site" evidence="1">
    <location>
        <position position="45"/>
    </location>
    <ligand>
        <name>ATP</name>
        <dbReference type="ChEBI" id="CHEBI:30616"/>
    </ligand>
</feature>
<feature type="binding site" evidence="1">
    <location>
        <position position="49"/>
    </location>
    <ligand>
        <name>ATP</name>
        <dbReference type="ChEBI" id="CHEBI:30616"/>
    </ligand>
</feature>
<feature type="binding site" evidence="1">
    <location>
        <position position="66"/>
    </location>
    <ligand>
        <name>UMP</name>
        <dbReference type="ChEBI" id="CHEBI:57865"/>
    </ligand>
</feature>
<feature type="binding site" evidence="1">
    <location>
        <begin position="114"/>
        <end position="120"/>
    </location>
    <ligand>
        <name>UMP</name>
        <dbReference type="ChEBI" id="CHEBI:57865"/>
    </ligand>
</feature>
<feature type="binding site" evidence="1">
    <location>
        <position position="140"/>
    </location>
    <ligand>
        <name>ATP</name>
        <dbReference type="ChEBI" id="CHEBI:30616"/>
    </ligand>
</feature>
<feature type="binding site" evidence="1">
    <location>
        <position position="141"/>
    </location>
    <ligand>
        <name>ATP</name>
        <dbReference type="ChEBI" id="CHEBI:30616"/>
    </ligand>
</feature>
<feature type="binding site" evidence="1">
    <location>
        <position position="146"/>
    </location>
    <ligand>
        <name>ATP</name>
        <dbReference type="ChEBI" id="CHEBI:30616"/>
    </ligand>
</feature>
<feature type="binding site" evidence="1">
    <location>
        <position position="149"/>
    </location>
    <ligand>
        <name>ATP</name>
        <dbReference type="ChEBI" id="CHEBI:30616"/>
    </ligand>
</feature>
<dbReference type="EC" id="2.7.4.22" evidence="1"/>
<dbReference type="EMBL" id="CP001398">
    <property type="protein sequence ID" value="ACS32863.1"/>
    <property type="molecule type" value="Genomic_DNA"/>
</dbReference>
<dbReference type="RefSeq" id="WP_015857981.1">
    <property type="nucleotide sequence ID" value="NC_012804.1"/>
</dbReference>
<dbReference type="SMR" id="C5A3Q1"/>
<dbReference type="STRING" id="593117.TGAM_0361"/>
<dbReference type="PaxDb" id="593117-TGAM_0361"/>
<dbReference type="GeneID" id="7987827"/>
<dbReference type="KEGG" id="tga:TGAM_0361"/>
<dbReference type="PATRIC" id="fig|593117.10.peg.359"/>
<dbReference type="eggNOG" id="arCOG00858">
    <property type="taxonomic scope" value="Archaea"/>
</dbReference>
<dbReference type="HOGENOM" id="CLU_079546_0_0_2"/>
<dbReference type="OrthoDB" id="372251at2157"/>
<dbReference type="UniPathway" id="UPA00159">
    <property type="reaction ID" value="UER00275"/>
</dbReference>
<dbReference type="Proteomes" id="UP000001488">
    <property type="component" value="Chromosome"/>
</dbReference>
<dbReference type="GO" id="GO:0005737">
    <property type="term" value="C:cytoplasm"/>
    <property type="evidence" value="ECO:0007669"/>
    <property type="project" value="UniProtKB-SubCell"/>
</dbReference>
<dbReference type="GO" id="GO:0005524">
    <property type="term" value="F:ATP binding"/>
    <property type="evidence" value="ECO:0007669"/>
    <property type="project" value="UniProtKB-KW"/>
</dbReference>
<dbReference type="GO" id="GO:0033862">
    <property type="term" value="F:UMP kinase activity"/>
    <property type="evidence" value="ECO:0007669"/>
    <property type="project" value="UniProtKB-EC"/>
</dbReference>
<dbReference type="GO" id="GO:0044210">
    <property type="term" value="P:'de novo' CTP biosynthetic process"/>
    <property type="evidence" value="ECO:0007669"/>
    <property type="project" value="UniProtKB-UniRule"/>
</dbReference>
<dbReference type="GO" id="GO:0006225">
    <property type="term" value="P:UDP biosynthetic process"/>
    <property type="evidence" value="ECO:0007669"/>
    <property type="project" value="TreeGrafter"/>
</dbReference>
<dbReference type="CDD" id="cd04253">
    <property type="entry name" value="AAK_UMPK-PyrH-Pf"/>
    <property type="match status" value="1"/>
</dbReference>
<dbReference type="FunFam" id="3.40.1160.10:FF:000030">
    <property type="entry name" value="Uridylate kinase"/>
    <property type="match status" value="1"/>
</dbReference>
<dbReference type="Gene3D" id="3.40.1160.10">
    <property type="entry name" value="Acetylglutamate kinase-like"/>
    <property type="match status" value="1"/>
</dbReference>
<dbReference type="HAMAP" id="MF_01220_A">
    <property type="entry name" value="PyrH_A"/>
    <property type="match status" value="1"/>
</dbReference>
<dbReference type="InterPro" id="IPR036393">
    <property type="entry name" value="AceGlu_kinase-like_sf"/>
</dbReference>
<dbReference type="InterPro" id="IPR001048">
    <property type="entry name" value="Asp/Glu/Uridylate_kinase"/>
</dbReference>
<dbReference type="InterPro" id="IPR011817">
    <property type="entry name" value="Uridylate_kinase"/>
</dbReference>
<dbReference type="InterPro" id="IPR011818">
    <property type="entry name" value="Uridylate_kinase_arch/spir"/>
</dbReference>
<dbReference type="NCBIfam" id="TIGR02076">
    <property type="entry name" value="pyrH_arch"/>
    <property type="match status" value="1"/>
</dbReference>
<dbReference type="PANTHER" id="PTHR42833">
    <property type="entry name" value="URIDYLATE KINASE"/>
    <property type="match status" value="1"/>
</dbReference>
<dbReference type="PANTHER" id="PTHR42833:SF4">
    <property type="entry name" value="URIDYLATE KINASE PUMPKIN, CHLOROPLASTIC"/>
    <property type="match status" value="1"/>
</dbReference>
<dbReference type="Pfam" id="PF00696">
    <property type="entry name" value="AA_kinase"/>
    <property type="match status" value="1"/>
</dbReference>
<dbReference type="PIRSF" id="PIRSF005650">
    <property type="entry name" value="Uridylate_kin"/>
    <property type="match status" value="1"/>
</dbReference>
<dbReference type="SUPFAM" id="SSF53633">
    <property type="entry name" value="Carbamate kinase-like"/>
    <property type="match status" value="1"/>
</dbReference>
<accession>C5A3Q1</accession>
<keyword id="KW-0067">ATP-binding</keyword>
<keyword id="KW-0963">Cytoplasm</keyword>
<keyword id="KW-0418">Kinase</keyword>
<keyword id="KW-0547">Nucleotide-binding</keyword>
<keyword id="KW-0665">Pyrimidine biosynthesis</keyword>
<keyword id="KW-1185">Reference proteome</keyword>
<keyword id="KW-0808">Transferase</keyword>
<proteinExistence type="inferred from homology"/>
<gene>
    <name evidence="1" type="primary">pyrH</name>
    <name type="ordered locus">TGAM_0361</name>
</gene>
<reference key="1">
    <citation type="journal article" date="2007" name="Genome Biol.">
        <title>Genome analysis and genome-wide proteomics of Thermococcus gammatolerans, the most radioresistant organism known amongst the Archaea.</title>
        <authorList>
            <person name="Zivanovic Y."/>
            <person name="Armengaud J."/>
            <person name="Lagorce A."/>
            <person name="Leplat C."/>
            <person name="Guerin P."/>
            <person name="Dutertre M."/>
            <person name="Anthouard V."/>
            <person name="Forterre P."/>
            <person name="Wincker P."/>
            <person name="Confalonieri F."/>
        </authorList>
    </citation>
    <scope>NUCLEOTIDE SEQUENCE [LARGE SCALE GENOMIC DNA]</scope>
    <source>
        <strain>DSM 15229 / JCM 11827 / EJ3</strain>
    </source>
</reference>
<protein>
    <recommendedName>
        <fullName evidence="1">Uridylate kinase</fullName>
        <shortName evidence="1">UK</shortName>
        <ecNumber evidence="1">2.7.4.22</ecNumber>
    </recommendedName>
    <alternativeName>
        <fullName evidence="1">Uridine monophosphate kinase</fullName>
        <shortName evidence="1">UMP kinase</shortName>
        <shortName evidence="1">UMPK</shortName>
    </alternativeName>
</protein>
<evidence type="ECO:0000255" key="1">
    <source>
        <dbReference type="HAMAP-Rule" id="MF_01220"/>
    </source>
</evidence>